<keyword id="KW-0106">Calcium</keyword>
<keyword id="KW-0130">Cell adhesion</keyword>
<keyword id="KW-1003">Cell membrane</keyword>
<keyword id="KW-0165">Cleavage on pair of basic residues</keyword>
<keyword id="KW-1015">Disulfide bond</keyword>
<keyword id="KW-0272">Extracellular matrix</keyword>
<keyword id="KW-0333">Golgi apparatus</keyword>
<keyword id="KW-0378">Hydrolase</keyword>
<keyword id="KW-0472">Membrane</keyword>
<keyword id="KW-0479">Metal-binding</keyword>
<keyword id="KW-0482">Metalloprotease</keyword>
<keyword id="KW-0645">Protease</keyword>
<keyword id="KW-1267">Proteomics identification</keyword>
<keyword id="KW-1185">Reference proteome</keyword>
<keyword id="KW-0677">Repeat</keyword>
<keyword id="KW-0964">Secreted</keyword>
<keyword id="KW-0732">Signal</keyword>
<keyword id="KW-0812">Transmembrane</keyword>
<keyword id="KW-1133">Transmembrane helix</keyword>
<keyword id="KW-0862">Zinc</keyword>
<keyword id="KW-0865">Zymogen</keyword>
<gene>
    <name type="primary">MMP24</name>
    <name type="synonym">MT5MMP</name>
</gene>
<feature type="signal peptide" evidence="2">
    <location>
        <begin position="1"/>
        <end position="52"/>
    </location>
</feature>
<feature type="propeptide" id="PRO_0000028846" evidence="1">
    <location>
        <begin position="53"/>
        <end position="155"/>
    </location>
</feature>
<feature type="chain" id="PRO_0000028847" description="Matrix metalloproteinase-24">
    <location>
        <begin position="156"/>
        <end position="645"/>
    </location>
</feature>
<feature type="chain" id="PRO_0000302758" description="Processed matrix metalloproteinase-24" evidence="1">
    <location>
        <begin position="156"/>
        <end position="581"/>
    </location>
</feature>
<feature type="topological domain" description="Extracellular" evidence="2">
    <location>
        <begin position="53"/>
        <end position="602"/>
    </location>
</feature>
<feature type="transmembrane region" description="Helical" evidence="2">
    <location>
        <begin position="603"/>
        <end position="623"/>
    </location>
</feature>
<feature type="topological domain" description="Cytoplasmic" evidence="2">
    <location>
        <begin position="624"/>
        <end position="645"/>
    </location>
</feature>
<feature type="repeat" description="Hemopexin 1">
    <location>
        <begin position="377"/>
        <end position="425"/>
    </location>
</feature>
<feature type="repeat" description="Hemopexin 2">
    <location>
        <begin position="426"/>
        <end position="471"/>
    </location>
</feature>
<feature type="repeat" description="Hemopexin 3">
    <location>
        <begin position="473"/>
        <end position="521"/>
    </location>
</feature>
<feature type="repeat" description="Hemopexin 4">
    <location>
        <begin position="522"/>
        <end position="569"/>
    </location>
</feature>
<feature type="region of interest" description="Disordered" evidence="4">
    <location>
        <begin position="1"/>
        <end position="26"/>
    </location>
</feature>
<feature type="region of interest" description="Disordered" evidence="4">
    <location>
        <begin position="323"/>
        <end position="380"/>
    </location>
</feature>
<feature type="short sequence motif" description="Cysteine switch" evidence="1">
    <location>
        <begin position="137"/>
        <end position="144"/>
    </location>
</feature>
<feature type="short sequence motif" description="PDZ-binding">
    <location>
        <begin position="643"/>
        <end position="645"/>
    </location>
</feature>
<feature type="compositionally biased region" description="Low complexity" evidence="4">
    <location>
        <begin position="1"/>
        <end position="10"/>
    </location>
</feature>
<feature type="compositionally biased region" description="Pro residues" evidence="4">
    <location>
        <begin position="11"/>
        <end position="22"/>
    </location>
</feature>
<feature type="compositionally biased region" description="Pro residues" evidence="4">
    <location>
        <begin position="329"/>
        <end position="341"/>
    </location>
</feature>
<feature type="compositionally biased region" description="Basic and acidic residues" evidence="4">
    <location>
        <begin position="349"/>
        <end position="359"/>
    </location>
</feature>
<feature type="active site" evidence="3">
    <location>
        <position position="283"/>
    </location>
</feature>
<feature type="binding site" description="in inhibited form" evidence="1">
    <location>
        <position position="139"/>
    </location>
    <ligand>
        <name>Zn(2+)</name>
        <dbReference type="ChEBI" id="CHEBI:29105"/>
        <note>catalytic</note>
    </ligand>
</feature>
<feature type="binding site" evidence="3">
    <location>
        <position position="282"/>
    </location>
    <ligand>
        <name>Zn(2+)</name>
        <dbReference type="ChEBI" id="CHEBI:29105"/>
        <note>catalytic</note>
    </ligand>
</feature>
<feature type="binding site" evidence="3">
    <location>
        <position position="286"/>
    </location>
    <ligand>
        <name>Zn(2+)</name>
        <dbReference type="ChEBI" id="CHEBI:29105"/>
        <note>catalytic</note>
    </ligand>
</feature>
<feature type="binding site" evidence="3">
    <location>
        <position position="292"/>
    </location>
    <ligand>
        <name>Zn(2+)</name>
        <dbReference type="ChEBI" id="CHEBI:29105"/>
        <note>catalytic</note>
    </ligand>
</feature>
<feature type="site" description="Cleavage; by furin" evidence="1">
    <location>
        <begin position="581"/>
        <end position="582"/>
    </location>
</feature>
<feature type="disulfide bond" evidence="1">
    <location>
        <begin position="380"/>
        <end position="569"/>
    </location>
</feature>
<feature type="sequence variant" id="VAR_060166" description="In dbSNP:rs751887.">
    <original>R</original>
    <variation>H</variation>
    <location>
        <position position="564"/>
    </location>
</feature>
<sequence length="645" mass="73231">MPRSRGGRAAPGPPPPPPPPGQAPRWSRWRVPGRLLLLLLPALCCLPGAARAAAAAAGAGNRAAVAVAVARADEAEAPFAGQNWLKSYGYLLPYDSRASALHSAKALQSAVSTMQQFYGIPVTGVLDQTTIEWMKKPRCGVPDHPHLSRRRRNKRYALTGQKWRQKHITYSIHNYTPKVGELDTRKAIRQAFDVWQKVTPLTFEEVPYHEIKSDRKEADIMIFFASGFHGDSSPFDGEGGFLAHAYFPGPGIGGDTHFDSDEPWTLGNANHDGNDLFLVAVHELGHALGLEHSSDPSAIMAPFYQYMETHNFKLPQDDLQGIQKIYGPPAEPLEPTRPLPTLPVRRIHSPSERKHERQPRPPRPPLGDRPSTPGTKPNICDGNFNTVALFRGEMFVFKDRWFWRLRNNRVQEGYPMQIEQFWKGLPARIDAAYERADGRFVFFKGDKYWVFKEVTVEPGYPHSLGELGSCLPREGIDTALRWEPVGKTYFFKGERYWRYSEERRATDPGYPKPITVWKGIPQAPQGAFISKEGYYTYFYKGRDYWKFDNQKLSVEPGYPRNILRDWMGCNQKEVERRKERRLPQDDVDIMVTINDVPGSVNAVAVVIPCILSLCILVLVYTIFQFKNKTGPQPVTYYKRPVQEWV</sequence>
<reference key="1">
    <citation type="journal article" date="1999" name="Cancer Res.">
        <title>Identification and characterization of human MT5-MMP, a new membrane-bound activator of progelatinase a overexpressed in brain tumors.</title>
        <authorList>
            <person name="Llano E."/>
            <person name="Pendas A.M."/>
            <person name="Freije J.P."/>
            <person name="Nakano A."/>
            <person name="Knaeuper V."/>
            <person name="Murphy G."/>
            <person name="Lopez-Otin C."/>
        </authorList>
    </citation>
    <scope>NUCLEOTIDE SEQUENCE [MRNA]</scope>
    <scope>TISSUE SPECIFICITY</scope>
    <source>
        <tissue>Brain</tissue>
    </source>
</reference>
<reference key="2">
    <citation type="submission" date="1998-12" db="EMBL/GenBank/DDBJ databases">
        <title>Identification of a new membrane-type matrix metalloproteinase, MT5-MMP, that is expressed predominantly in cerebellum.</title>
        <authorList>
            <person name="Seiki M."/>
        </authorList>
    </citation>
    <scope>NUCLEOTIDE SEQUENCE [MRNA]</scope>
</reference>
<reference key="3">
    <citation type="journal article" date="2001" name="Nature">
        <title>The DNA sequence and comparative analysis of human chromosome 20.</title>
        <authorList>
            <person name="Deloukas P."/>
            <person name="Matthews L.H."/>
            <person name="Ashurst J.L."/>
            <person name="Burton J."/>
            <person name="Gilbert J.G.R."/>
            <person name="Jones M."/>
            <person name="Stavrides G."/>
            <person name="Almeida J.P."/>
            <person name="Babbage A.K."/>
            <person name="Bagguley C.L."/>
            <person name="Bailey J."/>
            <person name="Barlow K.F."/>
            <person name="Bates K.N."/>
            <person name="Beard L.M."/>
            <person name="Beare D.M."/>
            <person name="Beasley O.P."/>
            <person name="Bird C.P."/>
            <person name="Blakey S.E."/>
            <person name="Bridgeman A.M."/>
            <person name="Brown A.J."/>
            <person name="Buck D."/>
            <person name="Burrill W.D."/>
            <person name="Butler A.P."/>
            <person name="Carder C."/>
            <person name="Carter N.P."/>
            <person name="Chapman J.C."/>
            <person name="Clamp M."/>
            <person name="Clark G."/>
            <person name="Clark L.N."/>
            <person name="Clark S.Y."/>
            <person name="Clee C.M."/>
            <person name="Clegg S."/>
            <person name="Cobley V.E."/>
            <person name="Collier R.E."/>
            <person name="Connor R.E."/>
            <person name="Corby N.R."/>
            <person name="Coulson A."/>
            <person name="Coville G.J."/>
            <person name="Deadman R."/>
            <person name="Dhami P.D."/>
            <person name="Dunn M."/>
            <person name="Ellington A.G."/>
            <person name="Frankland J.A."/>
            <person name="Fraser A."/>
            <person name="French L."/>
            <person name="Garner P."/>
            <person name="Grafham D.V."/>
            <person name="Griffiths C."/>
            <person name="Griffiths M.N.D."/>
            <person name="Gwilliam R."/>
            <person name="Hall R.E."/>
            <person name="Hammond S."/>
            <person name="Harley J.L."/>
            <person name="Heath P.D."/>
            <person name="Ho S."/>
            <person name="Holden J.L."/>
            <person name="Howden P.J."/>
            <person name="Huckle E."/>
            <person name="Hunt A.R."/>
            <person name="Hunt S.E."/>
            <person name="Jekosch K."/>
            <person name="Johnson C.M."/>
            <person name="Johnson D."/>
            <person name="Kay M.P."/>
            <person name="Kimberley A.M."/>
            <person name="King A."/>
            <person name="Knights A."/>
            <person name="Laird G.K."/>
            <person name="Lawlor S."/>
            <person name="Lehvaeslaiho M.H."/>
            <person name="Leversha M.A."/>
            <person name="Lloyd C."/>
            <person name="Lloyd D.M."/>
            <person name="Lovell J.D."/>
            <person name="Marsh V.L."/>
            <person name="Martin S.L."/>
            <person name="McConnachie L.J."/>
            <person name="McLay K."/>
            <person name="McMurray A.A."/>
            <person name="Milne S.A."/>
            <person name="Mistry D."/>
            <person name="Moore M.J.F."/>
            <person name="Mullikin J.C."/>
            <person name="Nickerson T."/>
            <person name="Oliver K."/>
            <person name="Parker A."/>
            <person name="Patel R."/>
            <person name="Pearce T.A.V."/>
            <person name="Peck A.I."/>
            <person name="Phillimore B.J.C.T."/>
            <person name="Prathalingam S.R."/>
            <person name="Plumb R.W."/>
            <person name="Ramsay H."/>
            <person name="Rice C.M."/>
            <person name="Ross M.T."/>
            <person name="Scott C.E."/>
            <person name="Sehra H.K."/>
            <person name="Shownkeen R."/>
            <person name="Sims S."/>
            <person name="Skuce C.D."/>
            <person name="Smith M.L."/>
            <person name="Soderlund C."/>
            <person name="Steward C.A."/>
            <person name="Sulston J.E."/>
            <person name="Swann R.M."/>
            <person name="Sycamore N."/>
            <person name="Taylor R."/>
            <person name="Tee L."/>
            <person name="Thomas D.W."/>
            <person name="Thorpe A."/>
            <person name="Tracey A."/>
            <person name="Tromans A.C."/>
            <person name="Vaudin M."/>
            <person name="Wall M."/>
            <person name="Wallis J.M."/>
            <person name="Whitehead S.L."/>
            <person name="Whittaker P."/>
            <person name="Willey D.L."/>
            <person name="Williams L."/>
            <person name="Williams S.A."/>
            <person name="Wilming L."/>
            <person name="Wray P.W."/>
            <person name="Hubbard T."/>
            <person name="Durbin R.M."/>
            <person name="Bentley D.R."/>
            <person name="Beck S."/>
            <person name="Rogers J."/>
        </authorList>
    </citation>
    <scope>NUCLEOTIDE SEQUENCE [LARGE SCALE GENOMIC DNA]</scope>
</reference>
<accession>Q9Y5R2</accession>
<accession>B7ZBG8</accession>
<accession>Q9H440</accession>
<protein>
    <recommendedName>
        <fullName>Matrix metalloproteinase-24</fullName>
        <shortName>MMP-24</shortName>
        <ecNumber>3.4.24.-</ecNumber>
    </recommendedName>
    <alternativeName>
        <fullName>Membrane-type matrix metalloproteinase 5</fullName>
        <shortName>MT-MMP 5</shortName>
        <shortName>MTMMP5</shortName>
    </alternativeName>
    <alternativeName>
        <fullName>Membrane-type-5 matrix metalloproteinase</fullName>
        <shortName>MT5-MMP</shortName>
        <shortName>MT5MMP</shortName>
    </alternativeName>
    <component>
        <recommendedName>
            <fullName>Processed matrix metalloproteinase-24</fullName>
        </recommendedName>
    </component>
</protein>
<organism>
    <name type="scientific">Homo sapiens</name>
    <name type="common">Human</name>
    <dbReference type="NCBI Taxonomy" id="9606"/>
    <lineage>
        <taxon>Eukaryota</taxon>
        <taxon>Metazoa</taxon>
        <taxon>Chordata</taxon>
        <taxon>Craniata</taxon>
        <taxon>Vertebrata</taxon>
        <taxon>Euteleostomi</taxon>
        <taxon>Mammalia</taxon>
        <taxon>Eutheria</taxon>
        <taxon>Euarchontoglires</taxon>
        <taxon>Primates</taxon>
        <taxon>Haplorrhini</taxon>
        <taxon>Catarrhini</taxon>
        <taxon>Hominidae</taxon>
        <taxon>Homo</taxon>
    </lineage>
</organism>
<name>MMP24_HUMAN</name>
<evidence type="ECO:0000250" key="1"/>
<evidence type="ECO:0000255" key="2"/>
<evidence type="ECO:0000255" key="3">
    <source>
        <dbReference type="PROSITE-ProRule" id="PRU10095"/>
    </source>
</evidence>
<evidence type="ECO:0000256" key="4">
    <source>
        <dbReference type="SAM" id="MobiDB-lite"/>
    </source>
</evidence>
<evidence type="ECO:0000269" key="5">
    <source>
    </source>
</evidence>
<evidence type="ECO:0000305" key="6"/>
<proteinExistence type="evidence at protein level"/>
<comment type="function">
    <text evidence="1">Metalloprotease that mediates cleavage of N-cadherin (CDH2) and acts as a regulator of neuro-immune interactions and neural stem cell quiescence. Involved in cell-cell interactions between nociceptive neurites and mast cells, possibly by mediating cleavage of CDH2, thereby acting as a mediator of peripheral thermal nociception and inflammatory hyperalgesia. Key regulator of neural stem cells quiescence by mediating cleavage of CDH2, affecting CDH2-mediated anchorage of neural stem cells to ependymocytes in the adult subependymal zone, leading to modulate their quiescence. May play a role in axonal growth. Able to activate progelatinase A. May also be a proteoglycanase involved in degradation of proteoglycans, such as dermatan sulfate and chondroitin sulfate proteoglycans. Cleaves partially fibronectin, but not collagen type I, nor laminin (By similarity).</text>
</comment>
<comment type="cofactor">
    <cofactor evidence="1">
        <name>Zn(2+)</name>
        <dbReference type="ChEBI" id="CHEBI:29105"/>
    </cofactor>
    <text evidence="1">Binds 1 zinc ion per subunit.</text>
</comment>
<comment type="cofactor">
    <cofactor evidence="1">
        <name>Ca(2+)</name>
        <dbReference type="ChEBI" id="CHEBI:29108"/>
    </cofactor>
</comment>
<comment type="subunit">
    <text evidence="1">Interacts (via PDZ-binding motif) with APBA3 (via PDZ domain). Interacts with GRIP1 and GRIP2 (By similarity).</text>
</comment>
<comment type="subcellular location">
    <molecule>Matrix metalloproteinase-24</molecule>
    <subcellularLocation>
        <location evidence="1">Cell membrane</location>
        <topology evidence="1">Single-pass type I membrane protein</topology>
    </subcellularLocation>
    <subcellularLocation>
        <location evidence="1">Golgi apparatus</location>
        <location evidence="1">trans-Golgi network membrane</location>
        <topology evidence="1">Single-pass type I membrane protein</topology>
    </subcellularLocation>
    <text evidence="1">Recycled back to the plasma membrane through the trans-Golgi network via interaction with APBA3.</text>
</comment>
<comment type="subcellular location">
    <molecule>Processed matrix metalloproteinase-24</molecule>
    <subcellularLocation>
        <location evidence="1">Secreted</location>
        <location evidence="1">Extracellular space</location>
        <location evidence="1">Extracellular matrix</location>
    </subcellularLocation>
    <text evidence="1">Also shed from cell surface as soluble proteinase, by a proteolytic cleavage.</text>
</comment>
<comment type="tissue specificity">
    <text evidence="5">Predominantly expressed in brain, kidney, pancreas and lung. Overexpressed in a series of brain tumors, including astrocytomas and glioblastomas.</text>
</comment>
<comment type="domain">
    <text>The conserved cysteine present in the cysteine-switch motif binds the catalytic zinc ion, thus inhibiting the enzyme. The dissociation of the cysteine from the zinc ion upon the activation-peptide release activates the enzyme.</text>
</comment>
<comment type="domain">
    <text evidence="1">The PDZ-binding motif (also named EWV motif) is required for interaction with PDZ domains of APBA3 and recycling through the trans-Golgi network.</text>
</comment>
<comment type="PTM">
    <text evidence="1">Cleaved by a furin endopeptidase in the trans-Golgi network.</text>
</comment>
<comment type="similarity">
    <text evidence="6">Belongs to the peptidase M10A family.</text>
</comment>
<dbReference type="EC" id="3.4.24.-"/>
<dbReference type="EMBL" id="AF131284">
    <property type="protein sequence ID" value="AAD42962.1"/>
    <property type="molecule type" value="mRNA"/>
</dbReference>
<dbReference type="EMBL" id="AB021227">
    <property type="protein sequence ID" value="BAA82967.1"/>
    <property type="molecule type" value="mRNA"/>
</dbReference>
<dbReference type="EMBL" id="AL121753">
    <property type="status" value="NOT_ANNOTATED_CDS"/>
    <property type="molecule type" value="Genomic_DNA"/>
</dbReference>
<dbReference type="CCDS" id="CCDS46593.1"/>
<dbReference type="RefSeq" id="NP_006681.1">
    <property type="nucleotide sequence ID" value="NM_006690.4"/>
</dbReference>
<dbReference type="SMR" id="Q9Y5R2"/>
<dbReference type="BioGRID" id="116099">
    <property type="interactions" value="18"/>
</dbReference>
<dbReference type="FunCoup" id="Q9Y5R2">
    <property type="interactions" value="458"/>
</dbReference>
<dbReference type="IntAct" id="Q9Y5R2">
    <property type="interactions" value="5"/>
</dbReference>
<dbReference type="MINT" id="Q9Y5R2"/>
<dbReference type="STRING" id="9606.ENSP00000246186"/>
<dbReference type="BindingDB" id="Q9Y5R2"/>
<dbReference type="ChEMBL" id="CHEMBL5050"/>
<dbReference type="DrugBank" id="DB00786">
    <property type="generic name" value="Marimastat"/>
</dbReference>
<dbReference type="MEROPS" id="M10.023"/>
<dbReference type="iPTMnet" id="Q9Y5R2"/>
<dbReference type="PhosphoSitePlus" id="Q9Y5R2"/>
<dbReference type="BioMuta" id="MMP24"/>
<dbReference type="DMDM" id="12585280"/>
<dbReference type="jPOST" id="Q9Y5R2"/>
<dbReference type="MassIVE" id="Q9Y5R2"/>
<dbReference type="PaxDb" id="9606-ENSP00000246186"/>
<dbReference type="PeptideAtlas" id="Q9Y5R2"/>
<dbReference type="ProteomicsDB" id="86480"/>
<dbReference type="Antibodypedia" id="5282">
    <property type="antibodies" value="208 antibodies from 31 providers"/>
</dbReference>
<dbReference type="DNASU" id="10893"/>
<dbReference type="Ensembl" id="ENST00000246186.8">
    <property type="protein sequence ID" value="ENSP00000246186.6"/>
    <property type="gene ID" value="ENSG00000125966.10"/>
</dbReference>
<dbReference type="GeneID" id="10893"/>
<dbReference type="KEGG" id="hsa:10893"/>
<dbReference type="MANE-Select" id="ENST00000246186.8">
    <property type="protein sequence ID" value="ENSP00000246186.6"/>
    <property type="RefSeq nucleotide sequence ID" value="NM_006690.4"/>
    <property type="RefSeq protein sequence ID" value="NP_006681.1"/>
</dbReference>
<dbReference type="UCSC" id="uc002xbu.3">
    <property type="organism name" value="human"/>
</dbReference>
<dbReference type="AGR" id="HGNC:7172"/>
<dbReference type="CTD" id="10893"/>
<dbReference type="DisGeNET" id="10893"/>
<dbReference type="GeneCards" id="MMP24"/>
<dbReference type="HGNC" id="HGNC:7172">
    <property type="gene designation" value="MMP24"/>
</dbReference>
<dbReference type="HPA" id="ENSG00000125966">
    <property type="expression patterns" value="Tissue enriched (brain)"/>
</dbReference>
<dbReference type="MIM" id="604871">
    <property type="type" value="gene"/>
</dbReference>
<dbReference type="neXtProt" id="NX_Q9Y5R2"/>
<dbReference type="OpenTargets" id="ENSG00000125966"/>
<dbReference type="PharmGKB" id="PA30881"/>
<dbReference type="VEuPathDB" id="HostDB:ENSG00000125966"/>
<dbReference type="eggNOG" id="KOG1565">
    <property type="taxonomic scope" value="Eukaryota"/>
</dbReference>
<dbReference type="GeneTree" id="ENSGT00940000158315"/>
<dbReference type="HOGENOM" id="CLU_015489_8_1_1"/>
<dbReference type="InParanoid" id="Q9Y5R2"/>
<dbReference type="OMA" id="AMTQHYY"/>
<dbReference type="OrthoDB" id="406838at2759"/>
<dbReference type="PAN-GO" id="Q9Y5R2">
    <property type="GO annotations" value="3 GO annotations based on evolutionary models"/>
</dbReference>
<dbReference type="PhylomeDB" id="Q9Y5R2"/>
<dbReference type="TreeFam" id="TF352396"/>
<dbReference type="PathwayCommons" id="Q9Y5R2"/>
<dbReference type="Reactome" id="R-HSA-1592389">
    <property type="pathway name" value="Activation of Matrix Metalloproteinases"/>
</dbReference>
<dbReference type="SignaLink" id="Q9Y5R2"/>
<dbReference type="SIGNOR" id="Q9Y5R2"/>
<dbReference type="BioGRID-ORCS" id="10893">
    <property type="hits" value="37 hits in 1169 CRISPR screens"/>
</dbReference>
<dbReference type="ChiTaRS" id="MMP24">
    <property type="organism name" value="human"/>
</dbReference>
<dbReference type="GeneWiki" id="MMP24"/>
<dbReference type="GenomeRNAi" id="10893"/>
<dbReference type="Pharos" id="Q9Y5R2">
    <property type="development level" value="Tbio"/>
</dbReference>
<dbReference type="PRO" id="PR:Q9Y5R2"/>
<dbReference type="Proteomes" id="UP000005640">
    <property type="component" value="Chromosome 20"/>
</dbReference>
<dbReference type="RNAct" id="Q9Y5R2">
    <property type="molecule type" value="protein"/>
</dbReference>
<dbReference type="Bgee" id="ENSG00000125966">
    <property type="expression patterns" value="Expressed in right hemisphere of cerebellum and 133 other cell types or tissues"/>
</dbReference>
<dbReference type="GO" id="GO:0070062">
    <property type="term" value="C:extracellular exosome"/>
    <property type="evidence" value="ECO:0007005"/>
    <property type="project" value="UniProtKB"/>
</dbReference>
<dbReference type="GO" id="GO:0031012">
    <property type="term" value="C:extracellular matrix"/>
    <property type="evidence" value="ECO:0007669"/>
    <property type="project" value="InterPro"/>
</dbReference>
<dbReference type="GO" id="GO:0005615">
    <property type="term" value="C:extracellular space"/>
    <property type="evidence" value="ECO:0000318"/>
    <property type="project" value="GO_Central"/>
</dbReference>
<dbReference type="GO" id="GO:0005886">
    <property type="term" value="C:plasma membrane"/>
    <property type="evidence" value="ECO:0000250"/>
    <property type="project" value="UniProtKB"/>
</dbReference>
<dbReference type="GO" id="GO:0032588">
    <property type="term" value="C:trans-Golgi network membrane"/>
    <property type="evidence" value="ECO:0000250"/>
    <property type="project" value="UniProtKB"/>
</dbReference>
<dbReference type="GO" id="GO:0045296">
    <property type="term" value="F:cadherin binding"/>
    <property type="evidence" value="ECO:0007669"/>
    <property type="project" value="Ensembl"/>
</dbReference>
<dbReference type="GO" id="GO:0008047">
    <property type="term" value="F:enzyme activator activity"/>
    <property type="evidence" value="ECO:0000304"/>
    <property type="project" value="ProtInc"/>
</dbReference>
<dbReference type="GO" id="GO:0004222">
    <property type="term" value="F:metalloendopeptidase activity"/>
    <property type="evidence" value="ECO:0000250"/>
    <property type="project" value="UniProtKB"/>
</dbReference>
<dbReference type="GO" id="GO:0008270">
    <property type="term" value="F:zinc ion binding"/>
    <property type="evidence" value="ECO:0007669"/>
    <property type="project" value="InterPro"/>
</dbReference>
<dbReference type="GO" id="GO:0044331">
    <property type="term" value="P:cell-cell adhesion mediated by cadherin"/>
    <property type="evidence" value="ECO:0000250"/>
    <property type="project" value="UniProtKB"/>
</dbReference>
<dbReference type="GO" id="GO:0098742">
    <property type="term" value="P:cell-cell adhesion via plasma-membrane adhesion molecules"/>
    <property type="evidence" value="ECO:0000250"/>
    <property type="project" value="UniProtKB"/>
</dbReference>
<dbReference type="GO" id="GO:0030574">
    <property type="term" value="P:collagen catabolic process"/>
    <property type="evidence" value="ECO:0000318"/>
    <property type="project" value="GO_Central"/>
</dbReference>
<dbReference type="GO" id="GO:0050965">
    <property type="term" value="P:detection of temperature stimulus involved in sensory perception of pain"/>
    <property type="evidence" value="ECO:0000250"/>
    <property type="project" value="UniProtKB"/>
</dbReference>
<dbReference type="GO" id="GO:0030198">
    <property type="term" value="P:extracellular matrix organization"/>
    <property type="evidence" value="ECO:0000318"/>
    <property type="project" value="GO_Central"/>
</dbReference>
<dbReference type="GO" id="GO:0010001">
    <property type="term" value="P:glial cell differentiation"/>
    <property type="evidence" value="ECO:0000250"/>
    <property type="project" value="UniProtKB"/>
</dbReference>
<dbReference type="GO" id="GO:0097150">
    <property type="term" value="P:neuronal stem cell population maintenance"/>
    <property type="evidence" value="ECO:0000250"/>
    <property type="project" value="UniProtKB"/>
</dbReference>
<dbReference type="GO" id="GO:0006508">
    <property type="term" value="P:proteolysis"/>
    <property type="evidence" value="ECO:0000250"/>
    <property type="project" value="UniProtKB"/>
</dbReference>
<dbReference type="CDD" id="cd00094">
    <property type="entry name" value="HX"/>
    <property type="match status" value="1"/>
</dbReference>
<dbReference type="CDD" id="cd04278">
    <property type="entry name" value="ZnMc_MMP"/>
    <property type="match status" value="1"/>
</dbReference>
<dbReference type="FunFam" id="3.40.390.10:FF:000005">
    <property type="entry name" value="Matrix metallopeptidase 16"/>
    <property type="match status" value="1"/>
</dbReference>
<dbReference type="FunFam" id="2.110.10.10:FF:000001">
    <property type="entry name" value="Matrix metallopeptidase 24"/>
    <property type="match status" value="1"/>
</dbReference>
<dbReference type="Gene3D" id="3.40.390.10">
    <property type="entry name" value="Collagenase (Catalytic Domain)"/>
    <property type="match status" value="1"/>
</dbReference>
<dbReference type="Gene3D" id="2.110.10.10">
    <property type="entry name" value="Hemopexin-like domain"/>
    <property type="match status" value="1"/>
</dbReference>
<dbReference type="InterPro" id="IPR000585">
    <property type="entry name" value="Hemopexin-like_dom"/>
</dbReference>
<dbReference type="InterPro" id="IPR036375">
    <property type="entry name" value="Hemopexin-like_dom_sf"/>
</dbReference>
<dbReference type="InterPro" id="IPR018487">
    <property type="entry name" value="Hemopexin-like_repeat"/>
</dbReference>
<dbReference type="InterPro" id="IPR018486">
    <property type="entry name" value="Hemopexin_CS"/>
</dbReference>
<dbReference type="InterPro" id="IPR033739">
    <property type="entry name" value="M10A_MMP"/>
</dbReference>
<dbReference type="InterPro" id="IPR024079">
    <property type="entry name" value="MetalloPept_cat_dom_sf"/>
</dbReference>
<dbReference type="InterPro" id="IPR001818">
    <property type="entry name" value="Pept_M10_metallopeptidase"/>
</dbReference>
<dbReference type="InterPro" id="IPR021190">
    <property type="entry name" value="Pept_M10A"/>
</dbReference>
<dbReference type="InterPro" id="IPR021805">
    <property type="entry name" value="Pept_M10A_metallopeptidase_C"/>
</dbReference>
<dbReference type="InterPro" id="IPR006026">
    <property type="entry name" value="Peptidase_Metallo"/>
</dbReference>
<dbReference type="InterPro" id="IPR002477">
    <property type="entry name" value="Peptidoglycan-bd-like"/>
</dbReference>
<dbReference type="InterPro" id="IPR036365">
    <property type="entry name" value="PGBD-like_sf"/>
</dbReference>
<dbReference type="PANTHER" id="PTHR10201">
    <property type="entry name" value="MATRIX METALLOPROTEINASE"/>
    <property type="match status" value="1"/>
</dbReference>
<dbReference type="PANTHER" id="PTHR10201:SF138">
    <property type="entry name" value="MATRIX METALLOPROTEINASE-24"/>
    <property type="match status" value="1"/>
</dbReference>
<dbReference type="Pfam" id="PF11857">
    <property type="entry name" value="DUF3377"/>
    <property type="match status" value="1"/>
</dbReference>
<dbReference type="Pfam" id="PF00045">
    <property type="entry name" value="Hemopexin"/>
    <property type="match status" value="4"/>
</dbReference>
<dbReference type="Pfam" id="PF00413">
    <property type="entry name" value="Peptidase_M10"/>
    <property type="match status" value="1"/>
</dbReference>
<dbReference type="Pfam" id="PF01471">
    <property type="entry name" value="PG_binding_1"/>
    <property type="match status" value="1"/>
</dbReference>
<dbReference type="PIRSF" id="PIRSF001191">
    <property type="entry name" value="Peptidase_M10A_matrix"/>
    <property type="match status" value="1"/>
</dbReference>
<dbReference type="PRINTS" id="PR00138">
    <property type="entry name" value="MATRIXIN"/>
</dbReference>
<dbReference type="SMART" id="SM00120">
    <property type="entry name" value="HX"/>
    <property type="match status" value="4"/>
</dbReference>
<dbReference type="SMART" id="SM00235">
    <property type="entry name" value="ZnMc"/>
    <property type="match status" value="1"/>
</dbReference>
<dbReference type="SUPFAM" id="SSF50923">
    <property type="entry name" value="Hemopexin-like domain"/>
    <property type="match status" value="1"/>
</dbReference>
<dbReference type="SUPFAM" id="SSF55486">
    <property type="entry name" value="Metalloproteases ('zincins'), catalytic domain"/>
    <property type="match status" value="1"/>
</dbReference>
<dbReference type="SUPFAM" id="SSF47090">
    <property type="entry name" value="PGBD-like"/>
    <property type="match status" value="1"/>
</dbReference>
<dbReference type="PROSITE" id="PS00024">
    <property type="entry name" value="HEMOPEXIN"/>
    <property type="match status" value="1"/>
</dbReference>
<dbReference type="PROSITE" id="PS51642">
    <property type="entry name" value="HEMOPEXIN_2"/>
    <property type="match status" value="4"/>
</dbReference>
<dbReference type="PROSITE" id="PS00142">
    <property type="entry name" value="ZINC_PROTEASE"/>
    <property type="match status" value="1"/>
</dbReference>